<reference key="1">
    <citation type="journal article" date="2004" name="Nat. Genet.">
        <title>Complete sequencing and characterization of 21,243 full-length human cDNAs.</title>
        <authorList>
            <person name="Ota T."/>
            <person name="Suzuki Y."/>
            <person name="Nishikawa T."/>
            <person name="Otsuki T."/>
            <person name="Sugiyama T."/>
            <person name="Irie R."/>
            <person name="Wakamatsu A."/>
            <person name="Hayashi K."/>
            <person name="Sato H."/>
            <person name="Nagai K."/>
            <person name="Kimura K."/>
            <person name="Makita H."/>
            <person name="Sekine M."/>
            <person name="Obayashi M."/>
            <person name="Nishi T."/>
            <person name="Shibahara T."/>
            <person name="Tanaka T."/>
            <person name="Ishii S."/>
            <person name="Yamamoto J."/>
            <person name="Saito K."/>
            <person name="Kawai Y."/>
            <person name="Isono Y."/>
            <person name="Nakamura Y."/>
            <person name="Nagahari K."/>
            <person name="Murakami K."/>
            <person name="Yasuda T."/>
            <person name="Iwayanagi T."/>
            <person name="Wagatsuma M."/>
            <person name="Shiratori A."/>
            <person name="Sudo H."/>
            <person name="Hosoiri T."/>
            <person name="Kaku Y."/>
            <person name="Kodaira H."/>
            <person name="Kondo H."/>
            <person name="Sugawara M."/>
            <person name="Takahashi M."/>
            <person name="Kanda K."/>
            <person name="Yokoi T."/>
            <person name="Furuya T."/>
            <person name="Kikkawa E."/>
            <person name="Omura Y."/>
            <person name="Abe K."/>
            <person name="Kamihara K."/>
            <person name="Katsuta N."/>
            <person name="Sato K."/>
            <person name="Tanikawa M."/>
            <person name="Yamazaki M."/>
            <person name="Ninomiya K."/>
            <person name="Ishibashi T."/>
            <person name="Yamashita H."/>
            <person name="Murakawa K."/>
            <person name="Fujimori K."/>
            <person name="Tanai H."/>
            <person name="Kimata M."/>
            <person name="Watanabe M."/>
            <person name="Hiraoka S."/>
            <person name="Chiba Y."/>
            <person name="Ishida S."/>
            <person name="Ono Y."/>
            <person name="Takiguchi S."/>
            <person name="Watanabe S."/>
            <person name="Yosida M."/>
            <person name="Hotuta T."/>
            <person name="Kusano J."/>
            <person name="Kanehori K."/>
            <person name="Takahashi-Fujii A."/>
            <person name="Hara H."/>
            <person name="Tanase T.-O."/>
            <person name="Nomura Y."/>
            <person name="Togiya S."/>
            <person name="Komai F."/>
            <person name="Hara R."/>
            <person name="Takeuchi K."/>
            <person name="Arita M."/>
            <person name="Imose N."/>
            <person name="Musashino K."/>
            <person name="Yuuki H."/>
            <person name="Oshima A."/>
            <person name="Sasaki N."/>
            <person name="Aotsuka S."/>
            <person name="Yoshikawa Y."/>
            <person name="Matsunawa H."/>
            <person name="Ichihara T."/>
            <person name="Shiohata N."/>
            <person name="Sano S."/>
            <person name="Moriya S."/>
            <person name="Momiyama H."/>
            <person name="Satoh N."/>
            <person name="Takami S."/>
            <person name="Terashima Y."/>
            <person name="Suzuki O."/>
            <person name="Nakagawa S."/>
            <person name="Senoh A."/>
            <person name="Mizoguchi H."/>
            <person name="Goto Y."/>
            <person name="Shimizu F."/>
            <person name="Wakebe H."/>
            <person name="Hishigaki H."/>
            <person name="Watanabe T."/>
            <person name="Sugiyama A."/>
            <person name="Takemoto M."/>
            <person name="Kawakami B."/>
            <person name="Yamazaki M."/>
            <person name="Watanabe K."/>
            <person name="Kumagai A."/>
            <person name="Itakura S."/>
            <person name="Fukuzumi Y."/>
            <person name="Fujimori Y."/>
            <person name="Komiyama M."/>
            <person name="Tashiro H."/>
            <person name="Tanigami A."/>
            <person name="Fujiwara T."/>
            <person name="Ono T."/>
            <person name="Yamada K."/>
            <person name="Fujii Y."/>
            <person name="Ozaki K."/>
            <person name="Hirao M."/>
            <person name="Ohmori Y."/>
            <person name="Kawabata A."/>
            <person name="Hikiji T."/>
            <person name="Kobatake N."/>
            <person name="Inagaki H."/>
            <person name="Ikema Y."/>
            <person name="Okamoto S."/>
            <person name="Okitani R."/>
            <person name="Kawakami T."/>
            <person name="Noguchi S."/>
            <person name="Itoh T."/>
            <person name="Shigeta K."/>
            <person name="Senba T."/>
            <person name="Matsumura K."/>
            <person name="Nakajima Y."/>
            <person name="Mizuno T."/>
            <person name="Morinaga M."/>
            <person name="Sasaki M."/>
            <person name="Togashi T."/>
            <person name="Oyama M."/>
            <person name="Hata H."/>
            <person name="Watanabe M."/>
            <person name="Komatsu T."/>
            <person name="Mizushima-Sugano J."/>
            <person name="Satoh T."/>
            <person name="Shirai Y."/>
            <person name="Takahashi Y."/>
            <person name="Nakagawa K."/>
            <person name="Okumura K."/>
            <person name="Nagase T."/>
            <person name="Nomura N."/>
            <person name="Kikuchi H."/>
            <person name="Masuho Y."/>
            <person name="Yamashita R."/>
            <person name="Nakai K."/>
            <person name="Yada T."/>
            <person name="Nakamura Y."/>
            <person name="Ohara O."/>
            <person name="Isogai T."/>
            <person name="Sugano S."/>
        </authorList>
    </citation>
    <scope>NUCLEOTIDE SEQUENCE [LARGE SCALE MRNA]</scope>
    <source>
        <tissue>Testis</tissue>
    </source>
</reference>
<reference key="2">
    <citation type="journal article" date="2004" name="Genome Res.">
        <title>The status, quality, and expansion of the NIH full-length cDNA project: the Mammalian Gene Collection (MGC).</title>
        <authorList>
            <consortium name="The MGC Project Team"/>
        </authorList>
    </citation>
    <scope>NUCLEOTIDE SEQUENCE [LARGE SCALE MRNA]</scope>
    <source>
        <tissue>Testis</tissue>
    </source>
</reference>
<reference key="3">
    <citation type="journal article" date="2014" name="J. Cell Sci.">
        <title>Proteomic analysis of mammalian sperm cells identifies new components of the centrosome.</title>
        <authorList>
            <person name="Firat-Karalar E.N."/>
            <person name="Sante J."/>
            <person name="Elliott S."/>
            <person name="Stearns T."/>
        </authorList>
    </citation>
    <scope>SUBCELLULAR LOCATION</scope>
</reference>
<keyword id="KW-0966">Cell projection</keyword>
<keyword id="KW-0969">Cilium</keyword>
<keyword id="KW-0175">Coiled coil</keyword>
<keyword id="KW-0963">Cytoplasm</keyword>
<keyword id="KW-0206">Cytoskeleton</keyword>
<keyword id="KW-0221">Differentiation</keyword>
<keyword id="KW-0282">Flagellum</keyword>
<keyword id="KW-1267">Proteomics identification</keyword>
<keyword id="KW-1185">Reference proteome</keyword>
<keyword id="KW-0744">Spermatogenesis</keyword>
<dbReference type="EMBL" id="AK097408">
    <property type="protein sequence ID" value="BAC05038.1"/>
    <property type="molecule type" value="mRNA"/>
</dbReference>
<dbReference type="EMBL" id="BC095479">
    <property type="protein sequence ID" value="AAH95479.1"/>
    <property type="molecule type" value="mRNA"/>
</dbReference>
<dbReference type="CCDS" id="CCDS9056.1"/>
<dbReference type="RefSeq" id="NP_872302.2">
    <property type="nucleotide sequence ID" value="NM_182496.3"/>
</dbReference>
<dbReference type="RefSeq" id="XP_011536185.1">
    <property type="nucleotide sequence ID" value="XM_011537883.3"/>
</dbReference>
<dbReference type="SMR" id="Q502W7"/>
<dbReference type="BioGRID" id="125701">
    <property type="interactions" value="3"/>
</dbReference>
<dbReference type="FunCoup" id="Q502W7">
    <property type="interactions" value="51"/>
</dbReference>
<dbReference type="IntAct" id="Q502W7">
    <property type="interactions" value="2"/>
</dbReference>
<dbReference type="STRING" id="9606.ENSP00000345470"/>
<dbReference type="iPTMnet" id="Q502W7"/>
<dbReference type="PhosphoSitePlus" id="Q502W7"/>
<dbReference type="BioMuta" id="CCDC38"/>
<dbReference type="DMDM" id="74740178"/>
<dbReference type="MassIVE" id="Q502W7"/>
<dbReference type="PaxDb" id="9606-ENSP00000345470"/>
<dbReference type="PeptideAtlas" id="Q502W7"/>
<dbReference type="ProteomicsDB" id="62398"/>
<dbReference type="Antibodypedia" id="49794">
    <property type="antibodies" value="111 antibodies from 16 providers"/>
</dbReference>
<dbReference type="DNASU" id="120935"/>
<dbReference type="Ensembl" id="ENST00000344280.8">
    <property type="protein sequence ID" value="ENSP00000345470.3"/>
    <property type="gene ID" value="ENSG00000165972.13"/>
</dbReference>
<dbReference type="GeneID" id="120935"/>
<dbReference type="KEGG" id="hsa:120935"/>
<dbReference type="MANE-Select" id="ENST00000344280.8">
    <property type="protein sequence ID" value="ENSP00000345470.3"/>
    <property type="RefSeq nucleotide sequence ID" value="NM_182496.3"/>
    <property type="RefSeq protein sequence ID" value="NP_872302.2"/>
</dbReference>
<dbReference type="UCSC" id="uc001tek.3">
    <property type="organism name" value="human"/>
</dbReference>
<dbReference type="AGR" id="HGNC:26843"/>
<dbReference type="CTD" id="120935"/>
<dbReference type="DisGeNET" id="120935"/>
<dbReference type="GeneCards" id="CCDC38"/>
<dbReference type="HGNC" id="HGNC:26843">
    <property type="gene designation" value="CCDC38"/>
</dbReference>
<dbReference type="HPA" id="ENSG00000165972">
    <property type="expression patterns" value="Tissue enriched (testis)"/>
</dbReference>
<dbReference type="neXtProt" id="NX_Q502W7"/>
<dbReference type="OpenTargets" id="ENSG00000165972"/>
<dbReference type="PharmGKB" id="PA142672193"/>
<dbReference type="VEuPathDB" id="HostDB:ENSG00000165972"/>
<dbReference type="eggNOG" id="ENOG502QSDI">
    <property type="taxonomic scope" value="Eukaryota"/>
</dbReference>
<dbReference type="GeneTree" id="ENSGT00940000153110"/>
<dbReference type="HOGENOM" id="CLU_026271_1_0_1"/>
<dbReference type="InParanoid" id="Q502W7"/>
<dbReference type="OMA" id="HSKPPSG"/>
<dbReference type="OrthoDB" id="10264063at2759"/>
<dbReference type="PAN-GO" id="Q502W7">
    <property type="GO annotations" value="1 GO annotation based on evolutionary models"/>
</dbReference>
<dbReference type="PhylomeDB" id="Q502W7"/>
<dbReference type="TreeFam" id="TF328835"/>
<dbReference type="PathwayCommons" id="Q502W7"/>
<dbReference type="SignaLink" id="Q502W7"/>
<dbReference type="BioGRID-ORCS" id="120935">
    <property type="hits" value="29 hits in 1146 CRISPR screens"/>
</dbReference>
<dbReference type="GenomeRNAi" id="120935"/>
<dbReference type="Pharos" id="Q502W7">
    <property type="development level" value="Tdark"/>
</dbReference>
<dbReference type="PRO" id="PR:Q502W7"/>
<dbReference type="Proteomes" id="UP000005640">
    <property type="component" value="Chromosome 12"/>
</dbReference>
<dbReference type="RNAct" id="Q502W7">
    <property type="molecule type" value="protein"/>
</dbReference>
<dbReference type="Bgee" id="ENSG00000165972">
    <property type="expression patterns" value="Expressed in left testis and 102 other cell types or tissues"/>
</dbReference>
<dbReference type="ExpressionAtlas" id="Q502W7">
    <property type="expression patterns" value="baseline and differential"/>
</dbReference>
<dbReference type="GO" id="GO:0005813">
    <property type="term" value="C:centrosome"/>
    <property type="evidence" value="ECO:0000314"/>
    <property type="project" value="UniProtKB"/>
</dbReference>
<dbReference type="GO" id="GO:0002177">
    <property type="term" value="C:manchette"/>
    <property type="evidence" value="ECO:0007669"/>
    <property type="project" value="Ensembl"/>
</dbReference>
<dbReference type="GO" id="GO:0048471">
    <property type="term" value="C:perinuclear region of cytoplasm"/>
    <property type="evidence" value="ECO:0007669"/>
    <property type="project" value="UniProtKB-SubCell"/>
</dbReference>
<dbReference type="GO" id="GO:0036126">
    <property type="term" value="C:sperm flagellum"/>
    <property type="evidence" value="ECO:0007669"/>
    <property type="project" value="Ensembl"/>
</dbReference>
<dbReference type="GO" id="GO:0061827">
    <property type="term" value="C:sperm head"/>
    <property type="evidence" value="ECO:0007669"/>
    <property type="project" value="Ensembl"/>
</dbReference>
<dbReference type="GO" id="GO:0061649">
    <property type="term" value="F:ubiquitin-modified histone reader activity"/>
    <property type="evidence" value="ECO:0000250"/>
    <property type="project" value="UniProtKB"/>
</dbReference>
<dbReference type="GO" id="GO:0001675">
    <property type="term" value="P:acrosome assembly"/>
    <property type="evidence" value="ECO:0000250"/>
    <property type="project" value="UniProtKB"/>
</dbReference>
<dbReference type="GO" id="GO:0035720">
    <property type="term" value="P:intraciliary anterograde transport"/>
    <property type="evidence" value="ECO:0007669"/>
    <property type="project" value="Ensembl"/>
</dbReference>
<dbReference type="GO" id="GO:0120316">
    <property type="term" value="P:sperm flagellum assembly"/>
    <property type="evidence" value="ECO:0000250"/>
    <property type="project" value="UniProtKB"/>
</dbReference>
<dbReference type="InterPro" id="IPR051147">
    <property type="entry name" value="CFAP_domain-containing"/>
</dbReference>
<dbReference type="InterPro" id="IPR025252">
    <property type="entry name" value="DUF4200"/>
</dbReference>
<dbReference type="PANTHER" id="PTHR21683:SF7">
    <property type="entry name" value="COILED-COIL DOMAIN-CONTAINING PROTEIN 38"/>
    <property type="match status" value="1"/>
</dbReference>
<dbReference type="PANTHER" id="PTHR21683">
    <property type="entry name" value="COILED-COIL DOMAIN-CONTAINING PROTEIN 42 LIKE-2-LIKE-RELATED"/>
    <property type="match status" value="1"/>
</dbReference>
<dbReference type="Pfam" id="PF13863">
    <property type="entry name" value="DUF4200"/>
    <property type="match status" value="1"/>
</dbReference>
<gene>
    <name type="primary">CCDC38</name>
</gene>
<name>CCD38_HUMAN</name>
<sequence length="563" mass="65315">MSSNLLPTLNSGGKVKDGSTKEDRPYKIFFRDLFLVKENEMAAKETEKFMNRNMKVYQKTTFSSRMKSHSYLSQLAFYPKRSGRSFEKFGPGPAPIPRLIEGSDTKRTVHEFINDQRDRFLLEYALSTKRNTIKKFEKDIAMRERQLKKAEKKLQDDALAFEEFLRENDQRSVDALKMAAQETINKLQMTAELKKASMEVQAVKSEIAKTEFLLREYMKYGFFLLQMSPKHWQIQQALKRAQASKSKANIILPKILAKLSLHSSNKEGILEESGRTAVLSEDASQGRDSQGKPSRSLTRTPEKKKSNLAESFGSEDSLEFLLDDEMDVDLEPALYFKEPEELLQVLRELEEQNLTLFQYSQDVDENLEEVNKREKVIQDKTNSNIEFLLEQEKMLKANCVREEEKAAELQLKSKLFSFGEFNSDAQEILIDSLSKKITQVYKVCIGDAEDDGLNPIQKLVKVESRLVELCDLIESIPKENVEAIERMKQKEWRQKFRDEKMKEKQRHQQERLKAALEKAVAQPKKKLGRRLVFHSKPPSGNKQQLPLVNETKTKSQEEEYFFT</sequence>
<organism>
    <name type="scientific">Homo sapiens</name>
    <name type="common">Human</name>
    <dbReference type="NCBI Taxonomy" id="9606"/>
    <lineage>
        <taxon>Eukaryota</taxon>
        <taxon>Metazoa</taxon>
        <taxon>Chordata</taxon>
        <taxon>Craniata</taxon>
        <taxon>Vertebrata</taxon>
        <taxon>Euteleostomi</taxon>
        <taxon>Mammalia</taxon>
        <taxon>Eutheria</taxon>
        <taxon>Euarchontoglires</taxon>
        <taxon>Primates</taxon>
        <taxon>Haplorrhini</taxon>
        <taxon>Catarrhini</taxon>
        <taxon>Hominidae</taxon>
        <taxon>Homo</taxon>
    </lineage>
</organism>
<evidence type="ECO:0000250" key="1">
    <source>
        <dbReference type="UniProtKB" id="Q8CDN8"/>
    </source>
</evidence>
<evidence type="ECO:0000255" key="2"/>
<evidence type="ECO:0000256" key="3">
    <source>
        <dbReference type="SAM" id="MobiDB-lite"/>
    </source>
</evidence>
<evidence type="ECO:0000269" key="4">
    <source>
    </source>
</evidence>
<evidence type="ECO:0000305" key="5"/>
<protein>
    <recommendedName>
        <fullName>Coiled-coil domain-containing protein 38</fullName>
    </recommendedName>
</protein>
<feature type="chain" id="PRO_0000234490" description="Coiled-coil domain-containing protein 38">
    <location>
        <begin position="1"/>
        <end position="563"/>
    </location>
</feature>
<feature type="region of interest" description="Disordered" evidence="3">
    <location>
        <begin position="1"/>
        <end position="21"/>
    </location>
</feature>
<feature type="region of interest" description="Disordered" evidence="3">
    <location>
        <begin position="272"/>
        <end position="311"/>
    </location>
</feature>
<feature type="region of interest" description="Disordered" evidence="3">
    <location>
        <begin position="522"/>
        <end position="563"/>
    </location>
</feature>
<feature type="coiled-coil region" evidence="2">
    <location>
        <begin position="129"/>
        <end position="212"/>
    </location>
</feature>
<feature type="coiled-coil region" evidence="2">
    <location>
        <begin position="384"/>
        <end position="415"/>
    </location>
</feature>
<feature type="coiled-coil region" evidence="2">
    <location>
        <begin position="497"/>
        <end position="522"/>
    </location>
</feature>
<feature type="compositionally biased region" description="Polar residues" evidence="3">
    <location>
        <begin position="1"/>
        <end position="11"/>
    </location>
</feature>
<feature type="compositionally biased region" description="Polar residues" evidence="3">
    <location>
        <begin position="282"/>
        <end position="299"/>
    </location>
</feature>
<feature type="compositionally biased region" description="Basic residues" evidence="3">
    <location>
        <begin position="523"/>
        <end position="533"/>
    </location>
</feature>
<feature type="sequence variant" id="VAR_056778" description="In dbSNP:rs12368787.">
    <original>V</original>
    <variation>F</variation>
    <location>
        <position position="36"/>
    </location>
</feature>
<feature type="sequence variant" id="VAR_056779" description="In dbSNP:rs10859974.">
    <original>M</original>
    <variation>V</variation>
    <location>
        <position position="227"/>
    </location>
</feature>
<feature type="sequence conflict" description="In Ref. 1; BAC05038." evidence="5" ref="1">
    <original>R</original>
    <variation>Q</variation>
    <location>
        <position position="530"/>
    </location>
</feature>
<accession>Q502W7</accession>
<accession>Q8N835</accession>
<comment type="function">
    <text evidence="1">Essential for male fertility. Required for sperm flagellum biogenesis. Also required for acrosome biogenesis. Required for the attachment of developing acrosomes to the nucleus during spermiogenesis and may be involved in the transport of fibrous sheath components.</text>
</comment>
<comment type="subunit">
    <text evidence="1">Interacts with CCDC42, CFAP53, IFT88 and ODF2. Interacts with CCDC146. Interacts with TEKT3. Interacts with ubiquitinated histone H2A.</text>
</comment>
<comment type="subcellular location">
    <subcellularLocation>
        <location evidence="4">Cytoplasm</location>
        <location evidence="4">Cytoskeleton</location>
        <location evidence="4">Microtubule organizing center</location>
        <location evidence="4">Centrosome</location>
    </subcellularLocation>
    <subcellularLocation>
        <location evidence="1">Cytoplasm</location>
        <location evidence="1">Perinuclear region</location>
    </subcellularLocation>
    <subcellularLocation>
        <location evidence="1">Cell projection</location>
        <location evidence="1">Cilium</location>
        <location evidence="1">Flagellum</location>
    </subcellularLocation>
    <subcellularLocation>
        <location evidence="1">Cytoplasm</location>
        <location evidence="1">Cytoskeleton</location>
    </subcellularLocation>
    <text evidence="1">Localizes to the sperm flagellum, manchette and the perinuclear region of the sperm head.</text>
</comment>
<proteinExistence type="evidence at protein level"/>